<name>RL23_RALPJ</name>
<reference key="1">
    <citation type="submission" date="2008-05" db="EMBL/GenBank/DDBJ databases">
        <title>Complete sequence of chromosome 1 of Ralstonia pickettii 12J.</title>
        <authorList>
            <person name="Lucas S."/>
            <person name="Copeland A."/>
            <person name="Lapidus A."/>
            <person name="Glavina del Rio T."/>
            <person name="Dalin E."/>
            <person name="Tice H."/>
            <person name="Bruce D."/>
            <person name="Goodwin L."/>
            <person name="Pitluck S."/>
            <person name="Meincke L."/>
            <person name="Brettin T."/>
            <person name="Detter J.C."/>
            <person name="Han C."/>
            <person name="Kuske C.R."/>
            <person name="Schmutz J."/>
            <person name="Larimer F."/>
            <person name="Land M."/>
            <person name="Hauser L."/>
            <person name="Kyrpides N."/>
            <person name="Mikhailova N."/>
            <person name="Marsh T."/>
            <person name="Richardson P."/>
        </authorList>
    </citation>
    <scope>NUCLEOTIDE SEQUENCE [LARGE SCALE GENOMIC DNA]</scope>
    <source>
        <strain>12J</strain>
    </source>
</reference>
<dbReference type="EMBL" id="CP001068">
    <property type="protein sequence ID" value="ACD28417.1"/>
    <property type="molecule type" value="Genomic_DNA"/>
</dbReference>
<dbReference type="SMR" id="B2UEL7"/>
<dbReference type="STRING" id="402626.Rpic_3295"/>
<dbReference type="KEGG" id="rpi:Rpic_3295"/>
<dbReference type="eggNOG" id="COG0089">
    <property type="taxonomic scope" value="Bacteria"/>
</dbReference>
<dbReference type="HOGENOM" id="CLU_037562_3_1_4"/>
<dbReference type="GO" id="GO:1990904">
    <property type="term" value="C:ribonucleoprotein complex"/>
    <property type="evidence" value="ECO:0007669"/>
    <property type="project" value="UniProtKB-KW"/>
</dbReference>
<dbReference type="GO" id="GO:0005840">
    <property type="term" value="C:ribosome"/>
    <property type="evidence" value="ECO:0007669"/>
    <property type="project" value="UniProtKB-KW"/>
</dbReference>
<dbReference type="GO" id="GO:0019843">
    <property type="term" value="F:rRNA binding"/>
    <property type="evidence" value="ECO:0007669"/>
    <property type="project" value="UniProtKB-UniRule"/>
</dbReference>
<dbReference type="GO" id="GO:0003735">
    <property type="term" value="F:structural constituent of ribosome"/>
    <property type="evidence" value="ECO:0007669"/>
    <property type="project" value="InterPro"/>
</dbReference>
<dbReference type="GO" id="GO:0006412">
    <property type="term" value="P:translation"/>
    <property type="evidence" value="ECO:0007669"/>
    <property type="project" value="UniProtKB-UniRule"/>
</dbReference>
<dbReference type="FunFam" id="3.30.70.330:FF:000001">
    <property type="entry name" value="50S ribosomal protein L23"/>
    <property type="match status" value="1"/>
</dbReference>
<dbReference type="Gene3D" id="3.30.70.330">
    <property type="match status" value="1"/>
</dbReference>
<dbReference type="HAMAP" id="MF_01369_B">
    <property type="entry name" value="Ribosomal_uL23_B"/>
    <property type="match status" value="1"/>
</dbReference>
<dbReference type="InterPro" id="IPR012677">
    <property type="entry name" value="Nucleotide-bd_a/b_plait_sf"/>
</dbReference>
<dbReference type="InterPro" id="IPR013025">
    <property type="entry name" value="Ribosomal_uL23-like"/>
</dbReference>
<dbReference type="InterPro" id="IPR012678">
    <property type="entry name" value="Ribosomal_uL23/eL15/eS24_sf"/>
</dbReference>
<dbReference type="NCBIfam" id="NF004359">
    <property type="entry name" value="PRK05738.1-3"/>
    <property type="match status" value="1"/>
</dbReference>
<dbReference type="NCBIfam" id="NF004363">
    <property type="entry name" value="PRK05738.2-4"/>
    <property type="match status" value="1"/>
</dbReference>
<dbReference type="PANTHER" id="PTHR11620">
    <property type="entry name" value="60S RIBOSOMAL PROTEIN L23A"/>
    <property type="match status" value="1"/>
</dbReference>
<dbReference type="Pfam" id="PF00276">
    <property type="entry name" value="Ribosomal_L23"/>
    <property type="match status" value="1"/>
</dbReference>
<dbReference type="SUPFAM" id="SSF54189">
    <property type="entry name" value="Ribosomal proteins S24e, L23 and L15e"/>
    <property type="match status" value="1"/>
</dbReference>
<accession>B2UEL7</accession>
<comment type="function">
    <text evidence="1">One of the early assembly proteins it binds 23S rRNA. One of the proteins that surrounds the polypeptide exit tunnel on the outside of the ribosome. Forms the main docking site for trigger factor binding to the ribosome.</text>
</comment>
<comment type="subunit">
    <text evidence="1">Part of the 50S ribosomal subunit. Contacts protein L29, and trigger factor when it is bound to the ribosome.</text>
</comment>
<comment type="similarity">
    <text evidence="1">Belongs to the universal ribosomal protein uL23 family.</text>
</comment>
<evidence type="ECO:0000255" key="1">
    <source>
        <dbReference type="HAMAP-Rule" id="MF_01369"/>
    </source>
</evidence>
<evidence type="ECO:0000305" key="2"/>
<sequence length="104" mass="11765">MTQVAKNDHRLMQVLLAPVVSEKATLVAEKNEQVVFEVARDANKGEVKAAVELLFKVEVESVQILNQKGKQKRFGRFMGRRDHVKKAYVSLKPGQEINFEAEAK</sequence>
<proteinExistence type="inferred from homology"/>
<feature type="chain" id="PRO_1000144602" description="Large ribosomal subunit protein uL23">
    <location>
        <begin position="1"/>
        <end position="104"/>
    </location>
</feature>
<organism>
    <name type="scientific">Ralstonia pickettii (strain 12J)</name>
    <dbReference type="NCBI Taxonomy" id="402626"/>
    <lineage>
        <taxon>Bacteria</taxon>
        <taxon>Pseudomonadati</taxon>
        <taxon>Pseudomonadota</taxon>
        <taxon>Betaproteobacteria</taxon>
        <taxon>Burkholderiales</taxon>
        <taxon>Burkholderiaceae</taxon>
        <taxon>Ralstonia</taxon>
    </lineage>
</organism>
<gene>
    <name evidence="1" type="primary">rplW</name>
    <name type="ordered locus">Rpic_3295</name>
</gene>
<protein>
    <recommendedName>
        <fullName evidence="1">Large ribosomal subunit protein uL23</fullName>
    </recommendedName>
    <alternativeName>
        <fullName evidence="2">50S ribosomal protein L23</fullName>
    </alternativeName>
</protein>
<keyword id="KW-0687">Ribonucleoprotein</keyword>
<keyword id="KW-0689">Ribosomal protein</keyword>
<keyword id="KW-0694">RNA-binding</keyword>
<keyword id="KW-0699">rRNA-binding</keyword>